<keyword id="KW-0560">Oxidoreductase</keyword>
<keyword id="KW-0819">tRNA processing</keyword>
<reference key="1">
    <citation type="journal article" date="2002" name="Lancet">
        <title>Genome and virulence determinants of high virulence community-acquired MRSA.</title>
        <authorList>
            <person name="Baba T."/>
            <person name="Takeuchi F."/>
            <person name="Kuroda M."/>
            <person name="Yuzawa H."/>
            <person name="Aoki K."/>
            <person name="Oguchi A."/>
            <person name="Nagai Y."/>
            <person name="Iwama N."/>
            <person name="Asano K."/>
            <person name="Naimi T."/>
            <person name="Kuroda H."/>
            <person name="Cui L."/>
            <person name="Yamamoto K."/>
            <person name="Hiramatsu K."/>
        </authorList>
    </citation>
    <scope>NUCLEOTIDE SEQUENCE [LARGE SCALE GENOMIC DNA]</scope>
    <source>
        <strain>MW2</strain>
    </source>
</reference>
<sequence>MNYQVLLYYKYTTIDDPEQFAQDHLAFCKAHHLKGRILVSTEGINGTLSGTKEETEQYMAHMHADERFKDMVFKIDEAEGHAFKKMHVRPRKEIVALDLEDDVDPRHTTGQYLSPVEFRKALEDDDTVIIDARNDYEFDLGHFRGAIRPNITRFRDLPDWIKENKALFADKKVVTYCTGGIRCEKFSGWLLKEGFEDVAQLHGGIATYGKDPETKGEYWDGKMYVFDDRISVNINQVEKTIIGKDWFDGKPCERYINCANPECNKQILVSEENETKYLGACSYECAKHERNRYVQANNISDNEWQQRLTNFDDLHQHA</sequence>
<dbReference type="EC" id="1.14.-.-" evidence="1"/>
<dbReference type="EMBL" id="BA000033">
    <property type="protein sequence ID" value="BAB96474.1"/>
    <property type="molecule type" value="Genomic_DNA"/>
</dbReference>
<dbReference type="RefSeq" id="WP_001109285.1">
    <property type="nucleotide sequence ID" value="NC_003923.1"/>
</dbReference>
<dbReference type="SMR" id="Q8NUH3"/>
<dbReference type="KEGG" id="sam:MW2609"/>
<dbReference type="HOGENOM" id="CLU_038878_1_0_9"/>
<dbReference type="GO" id="GO:0016705">
    <property type="term" value="F:oxidoreductase activity, acting on paired donors, with incorporation or reduction of molecular oxygen"/>
    <property type="evidence" value="ECO:0007669"/>
    <property type="project" value="UniProtKB-UniRule"/>
</dbReference>
<dbReference type="GO" id="GO:0006400">
    <property type="term" value="P:tRNA modification"/>
    <property type="evidence" value="ECO:0007669"/>
    <property type="project" value="UniProtKB-UniRule"/>
</dbReference>
<dbReference type="CDD" id="cd01518">
    <property type="entry name" value="RHOD_YceA"/>
    <property type="match status" value="1"/>
</dbReference>
<dbReference type="Gene3D" id="3.30.70.100">
    <property type="match status" value="1"/>
</dbReference>
<dbReference type="Gene3D" id="3.40.250.10">
    <property type="entry name" value="Rhodanese-like domain"/>
    <property type="match status" value="1"/>
</dbReference>
<dbReference type="HAMAP" id="MF_00469">
    <property type="entry name" value="TrhO"/>
    <property type="match status" value="1"/>
</dbReference>
<dbReference type="InterPro" id="IPR001763">
    <property type="entry name" value="Rhodanese-like_dom"/>
</dbReference>
<dbReference type="InterPro" id="IPR036873">
    <property type="entry name" value="Rhodanese-like_dom_sf"/>
</dbReference>
<dbReference type="InterPro" id="IPR022111">
    <property type="entry name" value="Rhodanese_C"/>
</dbReference>
<dbReference type="InterPro" id="IPR020936">
    <property type="entry name" value="TrhO"/>
</dbReference>
<dbReference type="InterPro" id="IPR040503">
    <property type="entry name" value="TRHO_N"/>
</dbReference>
<dbReference type="NCBIfam" id="NF001135">
    <property type="entry name" value="PRK00142.1-3"/>
    <property type="match status" value="1"/>
</dbReference>
<dbReference type="PANTHER" id="PTHR43268:SF3">
    <property type="entry name" value="RHODANESE-LIKE DOMAIN-CONTAINING PROTEIN 7-RELATED"/>
    <property type="match status" value="1"/>
</dbReference>
<dbReference type="PANTHER" id="PTHR43268">
    <property type="entry name" value="THIOSULFATE SULFURTRANSFERASE/RHODANESE-LIKE DOMAIN-CONTAINING PROTEIN 2"/>
    <property type="match status" value="1"/>
</dbReference>
<dbReference type="Pfam" id="PF00581">
    <property type="entry name" value="Rhodanese"/>
    <property type="match status" value="1"/>
</dbReference>
<dbReference type="Pfam" id="PF12368">
    <property type="entry name" value="Rhodanese_C"/>
    <property type="match status" value="1"/>
</dbReference>
<dbReference type="Pfam" id="PF17773">
    <property type="entry name" value="UPF0176_N"/>
    <property type="match status" value="1"/>
</dbReference>
<dbReference type="SMART" id="SM00450">
    <property type="entry name" value="RHOD"/>
    <property type="match status" value="1"/>
</dbReference>
<dbReference type="SUPFAM" id="SSF52821">
    <property type="entry name" value="Rhodanese/Cell cycle control phosphatase"/>
    <property type="match status" value="1"/>
</dbReference>
<dbReference type="PROSITE" id="PS50206">
    <property type="entry name" value="RHODANESE_3"/>
    <property type="match status" value="1"/>
</dbReference>
<organism>
    <name type="scientific">Staphylococcus aureus (strain MW2)</name>
    <dbReference type="NCBI Taxonomy" id="196620"/>
    <lineage>
        <taxon>Bacteria</taxon>
        <taxon>Bacillati</taxon>
        <taxon>Bacillota</taxon>
        <taxon>Bacilli</taxon>
        <taxon>Bacillales</taxon>
        <taxon>Staphylococcaceae</taxon>
        <taxon>Staphylococcus</taxon>
    </lineage>
</organism>
<gene>
    <name evidence="1" type="primary">trhO</name>
    <name type="ordered locus">MW2609</name>
</gene>
<protein>
    <recommendedName>
        <fullName evidence="1">tRNA uridine(34) hydroxylase</fullName>
        <ecNumber evidence="1">1.14.-.-</ecNumber>
    </recommendedName>
    <alternativeName>
        <fullName evidence="1">tRNA hydroxylation protein O</fullName>
    </alternativeName>
</protein>
<proteinExistence type="inferred from homology"/>
<comment type="function">
    <text evidence="1">Catalyzes oxygen-dependent 5-hydroxyuridine (ho5U) modification at position 34 in tRNAs.</text>
</comment>
<comment type="catalytic activity">
    <reaction evidence="1">
        <text>uridine(34) in tRNA + AH2 + O2 = 5-hydroxyuridine(34) in tRNA + A + H2O</text>
        <dbReference type="Rhea" id="RHEA:64224"/>
        <dbReference type="Rhea" id="RHEA-COMP:11727"/>
        <dbReference type="Rhea" id="RHEA-COMP:13381"/>
        <dbReference type="ChEBI" id="CHEBI:13193"/>
        <dbReference type="ChEBI" id="CHEBI:15377"/>
        <dbReference type="ChEBI" id="CHEBI:15379"/>
        <dbReference type="ChEBI" id="CHEBI:17499"/>
        <dbReference type="ChEBI" id="CHEBI:65315"/>
        <dbReference type="ChEBI" id="CHEBI:136877"/>
    </reaction>
</comment>
<comment type="similarity">
    <text evidence="1">Belongs to the TrhO family.</text>
</comment>
<accession>Q8NUH3</accession>
<evidence type="ECO:0000255" key="1">
    <source>
        <dbReference type="HAMAP-Rule" id="MF_00469"/>
    </source>
</evidence>
<feature type="chain" id="PRO_0000161518" description="tRNA uridine(34) hydroxylase">
    <location>
        <begin position="1"/>
        <end position="318"/>
    </location>
</feature>
<feature type="domain" description="Rhodanese" evidence="1">
    <location>
        <begin position="123"/>
        <end position="217"/>
    </location>
</feature>
<feature type="active site" description="Cysteine persulfide intermediate" evidence="1">
    <location>
        <position position="177"/>
    </location>
</feature>
<name>TRHO_STAAW</name>